<evidence type="ECO:0000255" key="1">
    <source>
        <dbReference type="HAMAP-Rule" id="MF_00337"/>
    </source>
</evidence>
<reference key="1">
    <citation type="submission" date="2007-10" db="EMBL/GenBank/DDBJ databases">
        <title>Complete genome of Alkaliphilus oremlandii OhILAs.</title>
        <authorList>
            <person name="Copeland A."/>
            <person name="Lucas S."/>
            <person name="Lapidus A."/>
            <person name="Barry K."/>
            <person name="Detter J.C."/>
            <person name="Glavina del Rio T."/>
            <person name="Hammon N."/>
            <person name="Israni S."/>
            <person name="Dalin E."/>
            <person name="Tice H."/>
            <person name="Pitluck S."/>
            <person name="Chain P."/>
            <person name="Malfatti S."/>
            <person name="Shin M."/>
            <person name="Vergez L."/>
            <person name="Schmutz J."/>
            <person name="Larimer F."/>
            <person name="Land M."/>
            <person name="Hauser L."/>
            <person name="Kyrpides N."/>
            <person name="Mikhailova N."/>
            <person name="Stolz J.F."/>
            <person name="Dawson A."/>
            <person name="Fisher E."/>
            <person name="Crable B."/>
            <person name="Perera E."/>
            <person name="Lisak J."/>
            <person name="Ranganathan M."/>
            <person name="Basu P."/>
            <person name="Richardson P."/>
        </authorList>
    </citation>
    <scope>NUCLEOTIDE SEQUENCE [LARGE SCALE GENOMIC DNA]</scope>
    <source>
        <strain>OhILAs</strain>
    </source>
</reference>
<gene>
    <name evidence="1" type="primary">xseB</name>
    <name type="ordered locus">Clos_1610</name>
</gene>
<accession>A8MFJ0</accession>
<organism>
    <name type="scientific">Alkaliphilus oremlandii (strain OhILAs)</name>
    <name type="common">Clostridium oremlandii (strain OhILAs)</name>
    <dbReference type="NCBI Taxonomy" id="350688"/>
    <lineage>
        <taxon>Bacteria</taxon>
        <taxon>Bacillati</taxon>
        <taxon>Bacillota</taxon>
        <taxon>Clostridia</taxon>
        <taxon>Peptostreptococcales</taxon>
        <taxon>Natronincolaceae</taxon>
        <taxon>Alkaliphilus</taxon>
    </lineage>
</organism>
<protein>
    <recommendedName>
        <fullName evidence="1">Exodeoxyribonuclease 7 small subunit</fullName>
        <ecNumber evidence="1">3.1.11.6</ecNumber>
    </recommendedName>
    <alternativeName>
        <fullName evidence="1">Exodeoxyribonuclease VII small subunit</fullName>
        <shortName evidence="1">Exonuclease VII small subunit</shortName>
    </alternativeName>
</protein>
<proteinExistence type="inferred from homology"/>
<comment type="function">
    <text evidence="1">Bidirectionally degrades single-stranded DNA into large acid-insoluble oligonucleotides, which are then degraded further into small acid-soluble oligonucleotides.</text>
</comment>
<comment type="catalytic activity">
    <reaction evidence="1">
        <text>Exonucleolytic cleavage in either 5'- to 3'- or 3'- to 5'-direction to yield nucleoside 5'-phosphates.</text>
        <dbReference type="EC" id="3.1.11.6"/>
    </reaction>
</comment>
<comment type="subunit">
    <text evidence="1">Heterooligomer composed of large and small subunits.</text>
</comment>
<comment type="subcellular location">
    <subcellularLocation>
        <location evidence="1">Cytoplasm</location>
    </subcellularLocation>
</comment>
<comment type="similarity">
    <text evidence="1">Belongs to the XseB family.</text>
</comment>
<sequence length="77" mass="9096">MESINFEETLKKLEDVVHKLEVEELSLDDSLKIFEEGIGLYRQCSNELNKIEKKISIIIEENEEFKKVPFPHDEEES</sequence>
<feature type="chain" id="PRO_1000059713" description="Exodeoxyribonuclease 7 small subunit">
    <location>
        <begin position="1"/>
        <end position="77"/>
    </location>
</feature>
<name>EX7S_ALKOO</name>
<dbReference type="EC" id="3.1.11.6" evidence="1"/>
<dbReference type="EMBL" id="CP000853">
    <property type="protein sequence ID" value="ABW19153.1"/>
    <property type="molecule type" value="Genomic_DNA"/>
</dbReference>
<dbReference type="RefSeq" id="WP_012159465.1">
    <property type="nucleotide sequence ID" value="NC_009922.1"/>
</dbReference>
<dbReference type="SMR" id="A8MFJ0"/>
<dbReference type="STRING" id="350688.Clos_1610"/>
<dbReference type="KEGG" id="aoe:Clos_1610"/>
<dbReference type="eggNOG" id="COG1722">
    <property type="taxonomic scope" value="Bacteria"/>
</dbReference>
<dbReference type="HOGENOM" id="CLU_145918_3_3_9"/>
<dbReference type="Proteomes" id="UP000000269">
    <property type="component" value="Chromosome"/>
</dbReference>
<dbReference type="GO" id="GO:0005829">
    <property type="term" value="C:cytosol"/>
    <property type="evidence" value="ECO:0007669"/>
    <property type="project" value="TreeGrafter"/>
</dbReference>
<dbReference type="GO" id="GO:0009318">
    <property type="term" value="C:exodeoxyribonuclease VII complex"/>
    <property type="evidence" value="ECO:0007669"/>
    <property type="project" value="InterPro"/>
</dbReference>
<dbReference type="GO" id="GO:0008855">
    <property type="term" value="F:exodeoxyribonuclease VII activity"/>
    <property type="evidence" value="ECO:0007669"/>
    <property type="project" value="UniProtKB-UniRule"/>
</dbReference>
<dbReference type="GO" id="GO:0006308">
    <property type="term" value="P:DNA catabolic process"/>
    <property type="evidence" value="ECO:0007669"/>
    <property type="project" value="UniProtKB-UniRule"/>
</dbReference>
<dbReference type="Gene3D" id="1.10.287.1040">
    <property type="entry name" value="Exonuclease VII, small subunit"/>
    <property type="match status" value="1"/>
</dbReference>
<dbReference type="HAMAP" id="MF_00337">
    <property type="entry name" value="Exonuc_7_S"/>
    <property type="match status" value="1"/>
</dbReference>
<dbReference type="InterPro" id="IPR003761">
    <property type="entry name" value="Exonuc_VII_S"/>
</dbReference>
<dbReference type="InterPro" id="IPR037004">
    <property type="entry name" value="Exonuc_VII_ssu_sf"/>
</dbReference>
<dbReference type="NCBIfam" id="NF002140">
    <property type="entry name" value="PRK00977.1-4"/>
    <property type="match status" value="1"/>
</dbReference>
<dbReference type="NCBIfam" id="TIGR01280">
    <property type="entry name" value="xseB"/>
    <property type="match status" value="1"/>
</dbReference>
<dbReference type="PANTHER" id="PTHR34137">
    <property type="entry name" value="EXODEOXYRIBONUCLEASE 7 SMALL SUBUNIT"/>
    <property type="match status" value="1"/>
</dbReference>
<dbReference type="PANTHER" id="PTHR34137:SF1">
    <property type="entry name" value="EXODEOXYRIBONUCLEASE 7 SMALL SUBUNIT"/>
    <property type="match status" value="1"/>
</dbReference>
<dbReference type="Pfam" id="PF02609">
    <property type="entry name" value="Exonuc_VII_S"/>
    <property type="match status" value="1"/>
</dbReference>
<dbReference type="PIRSF" id="PIRSF006488">
    <property type="entry name" value="Exonuc_VII_S"/>
    <property type="match status" value="1"/>
</dbReference>
<dbReference type="SUPFAM" id="SSF116842">
    <property type="entry name" value="XseB-like"/>
    <property type="match status" value="1"/>
</dbReference>
<keyword id="KW-0963">Cytoplasm</keyword>
<keyword id="KW-0269">Exonuclease</keyword>
<keyword id="KW-0378">Hydrolase</keyword>
<keyword id="KW-0540">Nuclease</keyword>
<keyword id="KW-1185">Reference proteome</keyword>